<feature type="transit peptide" description="Chloroplast" evidence="1">
    <location>
        <begin position="1"/>
        <end position="54"/>
    </location>
</feature>
<feature type="chain" id="PRO_0000031561" description="Ribulose bisphosphate carboxylase small subunit, chloroplastic" evidence="1">
    <location>
        <begin position="55"/>
        <end position="178"/>
    </location>
</feature>
<proteinExistence type="inferred from homology"/>
<reference key="1">
    <citation type="journal article" date="1990" name="Nucleic Acids Res.">
        <title>Nucleotide sequence of a white clover ribulose bisphosphate carboxylase small subunit gene.</title>
        <authorList>
            <person name="Ellison N."/>
            <person name="Yu P.L."/>
            <person name="White D.W.R."/>
        </authorList>
    </citation>
    <scope>NUCLEOTIDE SEQUENCE [GENOMIC DNA]</scope>
    <source>
        <strain>cv. Huia</strain>
    </source>
</reference>
<protein>
    <recommendedName>
        <fullName evidence="1">Ribulose bisphosphate carboxylase small subunit, chloroplastic</fullName>
        <shortName evidence="1">RuBisCO small subunit</shortName>
    </recommendedName>
</protein>
<organism>
    <name type="scientific">Trifolium repens</name>
    <name type="common">Creeping white clover</name>
    <dbReference type="NCBI Taxonomy" id="3899"/>
    <lineage>
        <taxon>Eukaryota</taxon>
        <taxon>Viridiplantae</taxon>
        <taxon>Streptophyta</taxon>
        <taxon>Embryophyta</taxon>
        <taxon>Tracheophyta</taxon>
        <taxon>Spermatophyta</taxon>
        <taxon>Magnoliopsida</taxon>
        <taxon>eudicotyledons</taxon>
        <taxon>Gunneridae</taxon>
        <taxon>Pentapetalae</taxon>
        <taxon>rosids</taxon>
        <taxon>fabids</taxon>
        <taxon>Fabales</taxon>
        <taxon>Fabaceae</taxon>
        <taxon>Papilionoideae</taxon>
        <taxon>50 kb inversion clade</taxon>
        <taxon>NPAAA clade</taxon>
        <taxon>Hologalegina</taxon>
        <taxon>IRL clade</taxon>
        <taxon>Trifolieae</taxon>
        <taxon>Trifolium</taxon>
    </lineage>
</organism>
<sequence length="178" mass="20038">MALISSAAVTTINRAPVQANLATPFTGLKSSAGFPVTKKNNDITSITSNGSRVNCMQVWPPVGKKKFETLSYLPPLTDEQLLKEVEYLLRKGWVPCVEFELEKGFVHRQYNSSPGYYDGRYWTMWRLPLFGTTDAAQVLKEVAECKAEYPEAFIRIIGFDNVRQVQCISFIASTPKVY</sequence>
<accession>P17673</accession>
<gene>
    <name evidence="1" type="primary">RBCS</name>
</gene>
<dbReference type="EMBL" id="X52293">
    <property type="protein sequence ID" value="CAA36542.1"/>
    <property type="molecule type" value="Genomic_DNA"/>
</dbReference>
<dbReference type="PIR" id="S12704">
    <property type="entry name" value="RKJYS"/>
</dbReference>
<dbReference type="SMR" id="P17673"/>
<dbReference type="OrthoDB" id="561at2759"/>
<dbReference type="GO" id="GO:0009507">
    <property type="term" value="C:chloroplast"/>
    <property type="evidence" value="ECO:0007669"/>
    <property type="project" value="UniProtKB-SubCell"/>
</dbReference>
<dbReference type="GO" id="GO:0016984">
    <property type="term" value="F:ribulose-bisphosphate carboxylase activity"/>
    <property type="evidence" value="ECO:0007669"/>
    <property type="project" value="UniProtKB-UniRule"/>
</dbReference>
<dbReference type="GO" id="GO:0009853">
    <property type="term" value="P:photorespiration"/>
    <property type="evidence" value="ECO:0007669"/>
    <property type="project" value="UniProtKB-KW"/>
</dbReference>
<dbReference type="GO" id="GO:0019253">
    <property type="term" value="P:reductive pentose-phosphate cycle"/>
    <property type="evidence" value="ECO:0007669"/>
    <property type="project" value="UniProtKB-UniRule"/>
</dbReference>
<dbReference type="CDD" id="cd03527">
    <property type="entry name" value="RuBisCO_small"/>
    <property type="match status" value="1"/>
</dbReference>
<dbReference type="FunFam" id="3.30.190.10:FF:000001">
    <property type="entry name" value="Ribulose bisphosphate carboxylase small chain, chloroplastic"/>
    <property type="match status" value="1"/>
</dbReference>
<dbReference type="Gene3D" id="3.30.190.10">
    <property type="entry name" value="Ribulose bisphosphate carboxylase, small subunit"/>
    <property type="match status" value="1"/>
</dbReference>
<dbReference type="HAMAP" id="MF_00859">
    <property type="entry name" value="RuBisCO_S_bact"/>
    <property type="match status" value="1"/>
</dbReference>
<dbReference type="InterPro" id="IPR024681">
    <property type="entry name" value="RuBisCO_ssu"/>
</dbReference>
<dbReference type="InterPro" id="IPR000894">
    <property type="entry name" value="RuBisCO_ssu_dom"/>
</dbReference>
<dbReference type="InterPro" id="IPR024680">
    <property type="entry name" value="RuBisCO_ssu_N"/>
</dbReference>
<dbReference type="InterPro" id="IPR036385">
    <property type="entry name" value="RuBisCO_ssu_sf"/>
</dbReference>
<dbReference type="PANTHER" id="PTHR31262">
    <property type="entry name" value="RIBULOSE BISPHOSPHATE CARBOXYLASE SMALL CHAIN 1, CHLOROPLASTIC"/>
    <property type="match status" value="1"/>
</dbReference>
<dbReference type="PANTHER" id="PTHR31262:SF19">
    <property type="entry name" value="RIBULOSE BISPHOSPHATE CARBOXYLASE SMALL SUBUNIT, CHLOROPLASTIC 2"/>
    <property type="match status" value="1"/>
</dbReference>
<dbReference type="Pfam" id="PF12338">
    <property type="entry name" value="RbcS"/>
    <property type="match status" value="1"/>
</dbReference>
<dbReference type="Pfam" id="PF00101">
    <property type="entry name" value="RuBisCO_small"/>
    <property type="match status" value="1"/>
</dbReference>
<dbReference type="PRINTS" id="PR00152">
    <property type="entry name" value="RUBISCOSMALL"/>
</dbReference>
<dbReference type="SMART" id="SM00961">
    <property type="entry name" value="RuBisCO_small"/>
    <property type="match status" value="1"/>
</dbReference>
<dbReference type="SUPFAM" id="SSF55239">
    <property type="entry name" value="RuBisCO, small subunit"/>
    <property type="match status" value="1"/>
</dbReference>
<keyword id="KW-0113">Calvin cycle</keyword>
<keyword id="KW-0120">Carbon dioxide fixation</keyword>
<keyword id="KW-0150">Chloroplast</keyword>
<keyword id="KW-0601">Photorespiration</keyword>
<keyword id="KW-0602">Photosynthesis</keyword>
<keyword id="KW-0934">Plastid</keyword>
<keyword id="KW-0809">Transit peptide</keyword>
<name>RBS_TRIRP</name>
<evidence type="ECO:0000255" key="1">
    <source>
        <dbReference type="HAMAP-Rule" id="MF_00860"/>
    </source>
</evidence>
<comment type="function">
    <text evidence="1">RuBisCO catalyzes two reactions: the carboxylation of D-ribulose 1,5-bisphosphate, the primary event in carbon dioxide fixation, as well as the oxidative fragmentation of the pentose substrate. Both reactions occur simultaneously and in competition at the same active site. Although the small subunit is not catalytic it is essential for maximal activity.</text>
</comment>
<comment type="subunit">
    <text evidence="1">Heterohexadecamer of 8 large and 8 small subunits.</text>
</comment>
<comment type="subcellular location">
    <subcellularLocation>
        <location evidence="1">Plastid</location>
        <location evidence="1">Chloroplast</location>
    </subcellularLocation>
</comment>
<comment type="miscellaneous">
    <text evidence="1">The basic functional RuBisCO is composed of a large chain homodimer in a 'head-to-tail' conformation. In form I RuBisCO this homodimer is arranged in a barrel-like tetramer with the small subunits forming a tetrameric 'cap' on each end of the 'barrel'.</text>
</comment>
<comment type="similarity">
    <text evidence="1">Belongs to the RuBisCO small chain family.</text>
</comment>